<comment type="function">
    <text evidence="1">Part of the endoplasmic reticulum membrane protein complex (EMC) that enables the energy-independent insertion into endoplasmic reticulum membranes of newly synthesized membrane proteins. Preferentially accommodates proteins with transmembrane domains that are weakly hydrophobic or contain destabilizing features such as charged and aromatic residues. Involved in the cotranslational insertion of multi-pass membrane proteins in which stop-transfer membrane-anchor sequences become ER membrane spanning helices. It is also required for the post-translational insertion of tail-anchored/TA proteins in endoplasmic reticulum membranes. By mediating the proper cotranslational insertion of N-terminal transmembrane domains in an N-exo topology, with translocated N-terminus in the lumen of the ER, controls the topology of multi-pass membrane proteins like the G protein-coupled receptors. By regulating the insertion of various proteins in membranes, it is indirectly involved in many cellular processes. Promotes angiogenesis and tissue repair in the heart after myocardial infarction. Stimulates cardiac endothelial cell migration and outgrowth via the activation of p38 MAPK, PAK and MAPK2 signaling pathways.</text>
</comment>
<comment type="subunit">
    <text evidence="1">Component of the ER membrane protein complex (EMC).</text>
</comment>
<comment type="subcellular location">
    <subcellularLocation>
        <location evidence="1">Endoplasmic reticulum membrane</location>
        <topology evidence="1">Single-pass type I membrane protein</topology>
    </subcellularLocation>
</comment>
<comment type="tissue specificity">
    <text evidence="3">Broadly expressed, with highest levels in pancreatic islets, testis and bladder. Present in the islets of Langerhans (at protein level).</text>
</comment>
<comment type="induction">
    <text evidence="3">By glucose in pancreatic islets.</text>
</comment>
<comment type="similarity">
    <text evidence="4">Belongs to the EMC10 family.</text>
</comment>
<accession>Q6AYH6</accession>
<evidence type="ECO:0000250" key="1">
    <source>
        <dbReference type="UniProtKB" id="Q5UCC4"/>
    </source>
</evidence>
<evidence type="ECO:0000255" key="2"/>
<evidence type="ECO:0000269" key="3">
    <source>
    </source>
</evidence>
<evidence type="ECO:0000305" key="4"/>
<evidence type="ECO:0007744" key="5">
    <source>
    </source>
</evidence>
<proteinExistence type="evidence at protein level"/>
<reference key="1">
    <citation type="journal article" date="2004" name="Genome Res.">
        <title>The status, quality, and expansion of the NIH full-length cDNA project: the Mammalian Gene Collection (MGC).</title>
        <authorList>
            <consortium name="The MGC Project Team"/>
        </authorList>
    </citation>
    <scope>NUCLEOTIDE SEQUENCE [LARGE SCALE MRNA]</scope>
    <source>
        <tissue>Testis</tissue>
    </source>
</reference>
<reference key="2">
    <citation type="journal article" date="2009" name="J. Endocrinol.">
        <title>Molecular cloning of a novel secreted peptide, INM02, and regulation of its expression by glucose.</title>
        <authorList>
            <person name="Wang X."/>
            <person name="Gong W."/>
            <person name="Liu Y."/>
            <person name="Yang Z."/>
            <person name="Zhou W."/>
            <person name="Wang M."/>
            <person name="Yang Z."/>
            <person name="Wen J."/>
            <person name="Hu R."/>
        </authorList>
    </citation>
    <scope>TISSUE SPECIFICITY</scope>
    <scope>INDUCTION BY GLUCOSE</scope>
</reference>
<reference key="3">
    <citation type="journal article" date="2013" name="J. Proteome Res.">
        <title>Site-specific glycan-peptide analysis for determination of N-glycoproteome heterogeneity.</title>
        <authorList>
            <person name="Parker B.L."/>
            <person name="Thaysen-Andersen M."/>
            <person name="Solis N."/>
            <person name="Scott N.E."/>
            <person name="Larsen M.R."/>
            <person name="Graham M.E."/>
            <person name="Packer N.H."/>
            <person name="Cordwell S.J."/>
        </authorList>
    </citation>
    <scope>GLYCOSYLATION [LARGE SCALE ANALYSIS] AT ASN-182</scope>
    <scope>IDENTIFICATION BY MASS SPECTROMETRY [LARGE SCALE ANALYSIS]</scope>
    <source>
        <tissue>Brain</tissue>
    </source>
</reference>
<name>EMC10_RAT</name>
<feature type="signal peptide" evidence="1">
    <location>
        <begin position="1"/>
        <end position="25"/>
    </location>
</feature>
<feature type="chain" id="PRO_0000315050" description="ER membrane protein complex subunit 10">
    <location>
        <begin position="26"/>
        <end position="258"/>
    </location>
</feature>
<feature type="topological domain" description="Lumenal" evidence="1">
    <location>
        <begin position="26"/>
        <end position="221"/>
    </location>
</feature>
<feature type="transmembrane region" description="Helical" evidence="2">
    <location>
        <begin position="222"/>
        <end position="242"/>
    </location>
</feature>
<feature type="topological domain" description="Cytoplasmic" evidence="1">
    <location>
        <begin position="243"/>
        <end position="258"/>
    </location>
</feature>
<feature type="glycosylation site" description="N-linked (GlcNAc...) asparagine" evidence="5">
    <location>
        <position position="182"/>
    </location>
</feature>
<gene>
    <name type="primary">Emc10</name>
    <name type="synonym">Inm02</name>
</gene>
<protein>
    <recommendedName>
        <fullName>ER membrane protein complex subunit 10</fullName>
    </recommendedName>
</protein>
<dbReference type="EMBL" id="BC079041">
    <property type="protein sequence ID" value="AAH79041.1"/>
    <property type="molecule type" value="mRNA"/>
</dbReference>
<dbReference type="RefSeq" id="NP_001004221.2">
    <property type="nucleotide sequence ID" value="NM_001004221.2"/>
</dbReference>
<dbReference type="SMR" id="Q6AYH6"/>
<dbReference type="FunCoup" id="Q6AYH6">
    <property type="interactions" value="1186"/>
</dbReference>
<dbReference type="STRING" id="10116.ENSRNOP00000026445"/>
<dbReference type="GlyCosmos" id="Q6AYH6">
    <property type="glycosylation" value="1 site, 2 glycans"/>
</dbReference>
<dbReference type="GlyGen" id="Q6AYH6">
    <property type="glycosylation" value="1 site, 2 N-linked glycans (1 site)"/>
</dbReference>
<dbReference type="iPTMnet" id="Q6AYH6"/>
<dbReference type="PhosphoSitePlus" id="Q6AYH6"/>
<dbReference type="PaxDb" id="10116-ENSRNOP00000026445"/>
<dbReference type="Ensembl" id="ENSRNOT00000119814.1">
    <property type="protein sequence ID" value="ENSRNOP00000077150.1"/>
    <property type="gene ID" value="ENSRNOG00000019532.7"/>
</dbReference>
<dbReference type="GeneID" id="292878"/>
<dbReference type="KEGG" id="rno:292878"/>
<dbReference type="UCSC" id="RGD:1303214">
    <property type="organism name" value="rat"/>
</dbReference>
<dbReference type="AGR" id="RGD:1303214"/>
<dbReference type="CTD" id="284361"/>
<dbReference type="RGD" id="1303214">
    <property type="gene designation" value="Emc10"/>
</dbReference>
<dbReference type="eggNOG" id="KOG4827">
    <property type="taxonomic scope" value="Eukaryota"/>
</dbReference>
<dbReference type="GeneTree" id="ENSGT00390000004520"/>
<dbReference type="HOGENOM" id="CLU_065716_0_0_1"/>
<dbReference type="InParanoid" id="Q6AYH6"/>
<dbReference type="OMA" id="QFNDVLW"/>
<dbReference type="OrthoDB" id="1894652at2759"/>
<dbReference type="PhylomeDB" id="Q6AYH6"/>
<dbReference type="TreeFam" id="TF314052"/>
<dbReference type="PRO" id="PR:Q6AYH6"/>
<dbReference type="Proteomes" id="UP000002494">
    <property type="component" value="Chromosome 1"/>
</dbReference>
<dbReference type="Bgee" id="ENSRNOG00000019532">
    <property type="expression patterns" value="Expressed in pancreas and 19 other cell types or tissues"/>
</dbReference>
<dbReference type="GO" id="GO:0072546">
    <property type="term" value="C:EMC complex"/>
    <property type="evidence" value="ECO:0000250"/>
    <property type="project" value="UniProtKB"/>
</dbReference>
<dbReference type="GO" id="GO:0005789">
    <property type="term" value="C:endoplasmic reticulum membrane"/>
    <property type="evidence" value="ECO:0000250"/>
    <property type="project" value="UniProtKB"/>
</dbReference>
<dbReference type="GO" id="GO:0016020">
    <property type="term" value="C:membrane"/>
    <property type="evidence" value="ECO:0000250"/>
    <property type="project" value="UniProtKB"/>
</dbReference>
<dbReference type="GO" id="GO:0001525">
    <property type="term" value="P:angiogenesis"/>
    <property type="evidence" value="ECO:0007669"/>
    <property type="project" value="UniProtKB-KW"/>
</dbReference>
<dbReference type="GO" id="GO:0045766">
    <property type="term" value="P:positive regulation of angiogenesis"/>
    <property type="evidence" value="ECO:0000250"/>
    <property type="project" value="UniProtKB"/>
</dbReference>
<dbReference type="GO" id="GO:0010595">
    <property type="term" value="P:positive regulation of endothelial cell migration"/>
    <property type="evidence" value="ECO:0000250"/>
    <property type="project" value="UniProtKB"/>
</dbReference>
<dbReference type="GO" id="GO:0001938">
    <property type="term" value="P:positive regulation of endothelial cell proliferation"/>
    <property type="evidence" value="ECO:0000250"/>
    <property type="project" value="UniProtKB"/>
</dbReference>
<dbReference type="GO" id="GO:0045050">
    <property type="term" value="P:protein insertion into ER membrane by stop-transfer membrane-anchor sequence"/>
    <property type="evidence" value="ECO:0000250"/>
    <property type="project" value="UniProtKB"/>
</dbReference>
<dbReference type="GO" id="GO:0071816">
    <property type="term" value="P:tail-anchored membrane protein insertion into ER membrane"/>
    <property type="evidence" value="ECO:0000250"/>
    <property type="project" value="UniProtKB"/>
</dbReference>
<dbReference type="CDD" id="cd22209">
    <property type="entry name" value="EMC10"/>
    <property type="match status" value="1"/>
</dbReference>
<dbReference type="PANTHER" id="PTHR21397">
    <property type="entry name" value="CHROMATIN COMPLEXES SUBUNIT BAP18-RELATED"/>
    <property type="match status" value="1"/>
</dbReference>
<dbReference type="PANTHER" id="PTHR21397:SF4">
    <property type="entry name" value="ER MEMBRANE PROTEIN COMPLEX SUBUNIT 10"/>
    <property type="match status" value="1"/>
</dbReference>
<dbReference type="Pfam" id="PF21203">
    <property type="entry name" value="ECM10"/>
    <property type="match status" value="1"/>
</dbReference>
<sequence>MVAAGAGVTQLLVLLLMVAAVPSRARGSGCRVGAAARGVGADGHEAEGCGTVALLLEHSFEIGDGANFQKRGSLLWNQQDGTLSATQRQLSEEERGRLRDVAAVNGLYRVRVPRRPGTLDGSEAGGHVSSFVPACSLVESHLSDQLTLHVDVAGNVVGLSVVVYPGGCRGSEVEDEDLELFNTSVHLRPPGTAPGPETAAFIERLEMEQAQKAKNPQEQKSFFAKYWMYIIPVVLFLMMSGAPDAGGQGGGGGGGSSR</sequence>
<keyword id="KW-0037">Angiogenesis</keyword>
<keyword id="KW-0256">Endoplasmic reticulum</keyword>
<keyword id="KW-0325">Glycoprotein</keyword>
<keyword id="KW-0472">Membrane</keyword>
<keyword id="KW-1185">Reference proteome</keyword>
<keyword id="KW-0732">Signal</keyword>
<keyword id="KW-0812">Transmembrane</keyword>
<keyword id="KW-1133">Transmembrane helix</keyword>
<organism>
    <name type="scientific">Rattus norvegicus</name>
    <name type="common">Rat</name>
    <dbReference type="NCBI Taxonomy" id="10116"/>
    <lineage>
        <taxon>Eukaryota</taxon>
        <taxon>Metazoa</taxon>
        <taxon>Chordata</taxon>
        <taxon>Craniata</taxon>
        <taxon>Vertebrata</taxon>
        <taxon>Euteleostomi</taxon>
        <taxon>Mammalia</taxon>
        <taxon>Eutheria</taxon>
        <taxon>Euarchontoglires</taxon>
        <taxon>Glires</taxon>
        <taxon>Rodentia</taxon>
        <taxon>Myomorpha</taxon>
        <taxon>Muroidea</taxon>
        <taxon>Muridae</taxon>
        <taxon>Murinae</taxon>
        <taxon>Rattus</taxon>
    </lineage>
</organism>